<sequence>MKAKELREKSVEELNAELLNLLREQFNLRMQAASGQLQQTHLLKQVRRDVARVKTLLTQKAGA</sequence>
<feature type="chain" id="PRO_1000121781" description="Large ribosomal subunit protein uL29">
    <location>
        <begin position="1"/>
        <end position="63"/>
    </location>
</feature>
<organism>
    <name type="scientific">Klebsiella pneumoniae (strain 342)</name>
    <dbReference type="NCBI Taxonomy" id="507522"/>
    <lineage>
        <taxon>Bacteria</taxon>
        <taxon>Pseudomonadati</taxon>
        <taxon>Pseudomonadota</taxon>
        <taxon>Gammaproteobacteria</taxon>
        <taxon>Enterobacterales</taxon>
        <taxon>Enterobacteriaceae</taxon>
        <taxon>Klebsiella/Raoultella group</taxon>
        <taxon>Klebsiella</taxon>
        <taxon>Klebsiella pneumoniae complex</taxon>
    </lineage>
</organism>
<protein>
    <recommendedName>
        <fullName evidence="1">Large ribosomal subunit protein uL29</fullName>
    </recommendedName>
    <alternativeName>
        <fullName evidence="2">50S ribosomal protein L29</fullName>
    </alternativeName>
</protein>
<dbReference type="EMBL" id="CP000964">
    <property type="protein sequence ID" value="ACI09799.1"/>
    <property type="molecule type" value="Genomic_DNA"/>
</dbReference>
<dbReference type="SMR" id="B5XNA2"/>
<dbReference type="KEGG" id="kpe:KPK_0408"/>
<dbReference type="HOGENOM" id="CLU_158491_1_2_6"/>
<dbReference type="Proteomes" id="UP000001734">
    <property type="component" value="Chromosome"/>
</dbReference>
<dbReference type="GO" id="GO:0022625">
    <property type="term" value="C:cytosolic large ribosomal subunit"/>
    <property type="evidence" value="ECO:0007669"/>
    <property type="project" value="TreeGrafter"/>
</dbReference>
<dbReference type="GO" id="GO:0003735">
    <property type="term" value="F:structural constituent of ribosome"/>
    <property type="evidence" value="ECO:0007669"/>
    <property type="project" value="InterPro"/>
</dbReference>
<dbReference type="GO" id="GO:0006412">
    <property type="term" value="P:translation"/>
    <property type="evidence" value="ECO:0007669"/>
    <property type="project" value="UniProtKB-UniRule"/>
</dbReference>
<dbReference type="CDD" id="cd00427">
    <property type="entry name" value="Ribosomal_L29_HIP"/>
    <property type="match status" value="1"/>
</dbReference>
<dbReference type="FunFam" id="1.10.287.310:FF:000001">
    <property type="entry name" value="50S ribosomal protein L29"/>
    <property type="match status" value="1"/>
</dbReference>
<dbReference type="Gene3D" id="1.10.287.310">
    <property type="match status" value="1"/>
</dbReference>
<dbReference type="HAMAP" id="MF_00374">
    <property type="entry name" value="Ribosomal_uL29"/>
    <property type="match status" value="1"/>
</dbReference>
<dbReference type="InterPro" id="IPR050063">
    <property type="entry name" value="Ribosomal_protein_uL29"/>
</dbReference>
<dbReference type="InterPro" id="IPR001854">
    <property type="entry name" value="Ribosomal_uL29"/>
</dbReference>
<dbReference type="InterPro" id="IPR018254">
    <property type="entry name" value="Ribosomal_uL29_CS"/>
</dbReference>
<dbReference type="InterPro" id="IPR036049">
    <property type="entry name" value="Ribosomal_uL29_sf"/>
</dbReference>
<dbReference type="NCBIfam" id="TIGR00012">
    <property type="entry name" value="L29"/>
    <property type="match status" value="1"/>
</dbReference>
<dbReference type="PANTHER" id="PTHR10916">
    <property type="entry name" value="60S RIBOSOMAL PROTEIN L35/50S RIBOSOMAL PROTEIN L29"/>
    <property type="match status" value="1"/>
</dbReference>
<dbReference type="PANTHER" id="PTHR10916:SF0">
    <property type="entry name" value="LARGE RIBOSOMAL SUBUNIT PROTEIN UL29C"/>
    <property type="match status" value="1"/>
</dbReference>
<dbReference type="Pfam" id="PF00831">
    <property type="entry name" value="Ribosomal_L29"/>
    <property type="match status" value="1"/>
</dbReference>
<dbReference type="SUPFAM" id="SSF46561">
    <property type="entry name" value="Ribosomal protein L29 (L29p)"/>
    <property type="match status" value="1"/>
</dbReference>
<dbReference type="PROSITE" id="PS00579">
    <property type="entry name" value="RIBOSOMAL_L29"/>
    <property type="match status" value="1"/>
</dbReference>
<accession>B5XNA2</accession>
<gene>
    <name evidence="1" type="primary">rpmC</name>
    <name type="ordered locus">KPK_0408</name>
</gene>
<reference key="1">
    <citation type="journal article" date="2008" name="PLoS Genet.">
        <title>Complete genome sequence of the N2-fixing broad host range endophyte Klebsiella pneumoniae 342 and virulence predictions verified in mice.</title>
        <authorList>
            <person name="Fouts D.E."/>
            <person name="Tyler H.L."/>
            <person name="DeBoy R.T."/>
            <person name="Daugherty S."/>
            <person name="Ren Q."/>
            <person name="Badger J.H."/>
            <person name="Durkin A.S."/>
            <person name="Huot H."/>
            <person name="Shrivastava S."/>
            <person name="Kothari S."/>
            <person name="Dodson R.J."/>
            <person name="Mohamoud Y."/>
            <person name="Khouri H."/>
            <person name="Roesch L.F.W."/>
            <person name="Krogfelt K.A."/>
            <person name="Struve C."/>
            <person name="Triplett E.W."/>
            <person name="Methe B.A."/>
        </authorList>
    </citation>
    <scope>NUCLEOTIDE SEQUENCE [LARGE SCALE GENOMIC DNA]</scope>
    <source>
        <strain>342</strain>
    </source>
</reference>
<comment type="similarity">
    <text evidence="1">Belongs to the universal ribosomal protein uL29 family.</text>
</comment>
<keyword id="KW-0687">Ribonucleoprotein</keyword>
<keyword id="KW-0689">Ribosomal protein</keyword>
<name>RL29_KLEP3</name>
<evidence type="ECO:0000255" key="1">
    <source>
        <dbReference type="HAMAP-Rule" id="MF_00374"/>
    </source>
</evidence>
<evidence type="ECO:0000305" key="2"/>
<proteinExistence type="inferred from homology"/>